<proteinExistence type="predicted"/>
<name>YB59_YEAST</name>
<keyword id="KW-0472">Membrane</keyword>
<keyword id="KW-1185">Reference proteome</keyword>
<keyword id="KW-0812">Transmembrane</keyword>
<keyword id="KW-1133">Transmembrane helix</keyword>
<dbReference type="EMBL" id="Z36078">
    <property type="protein sequence ID" value="CAA85173.1"/>
    <property type="molecule type" value="Genomic_DNA"/>
</dbReference>
<dbReference type="EMBL" id="BK006936">
    <property type="protein sequence ID" value="DAA80266.1"/>
    <property type="molecule type" value="Genomic_DNA"/>
</dbReference>
<dbReference type="PIR" id="S46083">
    <property type="entry name" value="S46083"/>
</dbReference>
<dbReference type="RefSeq" id="NP_001335746.1">
    <property type="nucleotide sequence ID" value="NM_001348891.1"/>
</dbReference>
<dbReference type="SMR" id="P38311"/>
<dbReference type="DIP" id="DIP-3883N"/>
<dbReference type="FunCoup" id="P38311">
    <property type="interactions" value="25"/>
</dbReference>
<dbReference type="STRING" id="4932.YBR209W"/>
<dbReference type="PaxDb" id="4932-YBR209W"/>
<dbReference type="EnsemblFungi" id="YBR209W_mRNA">
    <property type="protein sequence ID" value="YBR209W"/>
    <property type="gene ID" value="YBR209W"/>
</dbReference>
<dbReference type="GeneID" id="852508"/>
<dbReference type="AGR" id="SGD:S000000413"/>
<dbReference type="SGD" id="S000000413">
    <property type="gene designation" value="YBR209W"/>
</dbReference>
<dbReference type="HOGENOM" id="CLU_2238711_0_0_1"/>
<dbReference type="InParanoid" id="P38311"/>
<dbReference type="PRO" id="PR:P38311"/>
<dbReference type="Proteomes" id="UP000002311">
    <property type="component" value="Chromosome II"/>
</dbReference>
<dbReference type="RNAct" id="P38311">
    <property type="molecule type" value="protein"/>
</dbReference>
<dbReference type="GO" id="GO:0016020">
    <property type="term" value="C:membrane"/>
    <property type="evidence" value="ECO:0007669"/>
    <property type="project" value="UniProtKB-SubCell"/>
</dbReference>
<comment type="subcellular location">
    <subcellularLocation>
        <location evidence="2">Membrane</location>
        <topology evidence="2">Single-pass membrane protein</topology>
    </subcellularLocation>
</comment>
<reference key="1">
    <citation type="journal article" date="1994" name="EMBO J.">
        <title>Complete DNA sequence of yeast chromosome II.</title>
        <authorList>
            <person name="Feldmann H."/>
            <person name="Aigle M."/>
            <person name="Aljinovic G."/>
            <person name="Andre B."/>
            <person name="Baclet M.C."/>
            <person name="Barthe C."/>
            <person name="Baur A."/>
            <person name="Becam A.-M."/>
            <person name="Biteau N."/>
            <person name="Boles E."/>
            <person name="Brandt T."/>
            <person name="Brendel M."/>
            <person name="Brueckner M."/>
            <person name="Bussereau F."/>
            <person name="Christiansen C."/>
            <person name="Contreras R."/>
            <person name="Crouzet M."/>
            <person name="Cziepluch C."/>
            <person name="Demolis N."/>
            <person name="Delaveau T."/>
            <person name="Doignon F."/>
            <person name="Domdey H."/>
            <person name="Duesterhus S."/>
            <person name="Dubois E."/>
            <person name="Dujon B."/>
            <person name="El Bakkoury M."/>
            <person name="Entian K.-D."/>
            <person name="Feuermann M."/>
            <person name="Fiers W."/>
            <person name="Fobo G.M."/>
            <person name="Fritz C."/>
            <person name="Gassenhuber J."/>
            <person name="Glansdorff N."/>
            <person name="Goffeau A."/>
            <person name="Grivell L.A."/>
            <person name="de Haan M."/>
            <person name="Hein C."/>
            <person name="Herbert C.J."/>
            <person name="Hollenberg C.P."/>
            <person name="Holmstroem K."/>
            <person name="Jacq C."/>
            <person name="Jacquet M."/>
            <person name="Jauniaux J.-C."/>
            <person name="Jonniaux J.-L."/>
            <person name="Kallesoee T."/>
            <person name="Kiesau P."/>
            <person name="Kirchrath L."/>
            <person name="Koetter P."/>
            <person name="Korol S."/>
            <person name="Liebl S."/>
            <person name="Logghe M."/>
            <person name="Lohan A.J.E."/>
            <person name="Louis E.J."/>
            <person name="Li Z.Y."/>
            <person name="Maat M.J."/>
            <person name="Mallet L."/>
            <person name="Mannhaupt G."/>
            <person name="Messenguy F."/>
            <person name="Miosga T."/>
            <person name="Molemans F."/>
            <person name="Mueller S."/>
            <person name="Nasr F."/>
            <person name="Obermaier B."/>
            <person name="Perea J."/>
            <person name="Pierard A."/>
            <person name="Piravandi E."/>
            <person name="Pohl F.M."/>
            <person name="Pohl T.M."/>
            <person name="Potier S."/>
            <person name="Proft M."/>
            <person name="Purnelle B."/>
            <person name="Ramezani Rad M."/>
            <person name="Rieger M."/>
            <person name="Rose M."/>
            <person name="Schaaff-Gerstenschlaeger I."/>
            <person name="Scherens B."/>
            <person name="Schwarzlose C."/>
            <person name="Skala J."/>
            <person name="Slonimski P.P."/>
            <person name="Smits P.H.M."/>
            <person name="Souciet J.-L."/>
            <person name="Steensma H.Y."/>
            <person name="Stucka R."/>
            <person name="Urrestarazu L.A."/>
            <person name="van der Aart Q.J.M."/>
            <person name="Van Dyck L."/>
            <person name="Vassarotti A."/>
            <person name="Vetter I."/>
            <person name="Vierendeels F."/>
            <person name="Vissers S."/>
            <person name="Wagner G."/>
            <person name="de Wergifosse P."/>
            <person name="Wolfe K.H."/>
            <person name="Zagulski M."/>
            <person name="Zimmermann F.K."/>
            <person name="Mewes H.-W."/>
            <person name="Kleine K."/>
        </authorList>
    </citation>
    <scope>NUCLEOTIDE SEQUENCE [LARGE SCALE GENOMIC DNA]</scope>
    <source>
        <strain>ATCC 204508 / S288c</strain>
    </source>
</reference>
<reference key="2">
    <citation type="journal article" date="2014" name="G3 (Bethesda)">
        <title>The reference genome sequence of Saccharomyces cerevisiae: Then and now.</title>
        <authorList>
            <person name="Engel S.R."/>
            <person name="Dietrich F.S."/>
            <person name="Fisk D.G."/>
            <person name="Binkley G."/>
            <person name="Balakrishnan R."/>
            <person name="Costanzo M.C."/>
            <person name="Dwight S.S."/>
            <person name="Hitz B.C."/>
            <person name="Karra K."/>
            <person name="Nash R.S."/>
            <person name="Weng S."/>
            <person name="Wong E.D."/>
            <person name="Lloyd P."/>
            <person name="Skrzypek M.S."/>
            <person name="Miyasato S.R."/>
            <person name="Simison M."/>
            <person name="Cherry J.M."/>
        </authorList>
    </citation>
    <scope>GENOME REANNOTATION</scope>
    <source>
        <strain>ATCC 204508 / S288c</strain>
    </source>
</reference>
<accession>P38311</accession>
<accession>A0A1S0T047</accession>
<protein>
    <recommendedName>
        <fullName>Uncharacterized protein YBR209W</fullName>
    </recommendedName>
</protein>
<evidence type="ECO:0000255" key="1"/>
<evidence type="ECO:0000305" key="2"/>
<gene>
    <name type="ordered locus">YBR209W</name>
    <name type="ORF">YBR1451</name>
</gene>
<organism>
    <name type="scientific">Saccharomyces cerevisiae (strain ATCC 204508 / S288c)</name>
    <name type="common">Baker's yeast</name>
    <dbReference type="NCBI Taxonomy" id="559292"/>
    <lineage>
        <taxon>Eukaryota</taxon>
        <taxon>Fungi</taxon>
        <taxon>Dikarya</taxon>
        <taxon>Ascomycota</taxon>
        <taxon>Saccharomycotina</taxon>
        <taxon>Saccharomycetes</taxon>
        <taxon>Saccharomycetales</taxon>
        <taxon>Saccharomycetaceae</taxon>
        <taxon>Saccharomyces</taxon>
    </lineage>
</organism>
<feature type="chain" id="PRO_0000202511" description="Uncharacterized protein YBR209W">
    <location>
        <begin position="1"/>
        <end position="105"/>
    </location>
</feature>
<feature type="transmembrane region" description="Helical" evidence="1">
    <location>
        <begin position="29"/>
        <end position="49"/>
    </location>
</feature>
<sequence>MNAYWFHYRASIKKEAPNYKRTFLGRARNAFLLILSEAYLLFVFLSYLIRGKSLEKRVNDEAKCSQRCVPLQLANNLAFGDRHKRSANFKKGIANTHSSLICSKP</sequence>